<dbReference type="EMBL" id="AAHF01000001">
    <property type="protein sequence ID" value="EAL93513.1"/>
    <property type="molecule type" value="Genomic_DNA"/>
</dbReference>
<dbReference type="RefSeq" id="XP_755551.1">
    <property type="nucleotide sequence ID" value="XM_750458.1"/>
</dbReference>
<dbReference type="SMR" id="Q4X0V2"/>
<dbReference type="FunCoup" id="Q4X0V2">
    <property type="interactions" value="421"/>
</dbReference>
<dbReference type="STRING" id="330879.Q4X0V2"/>
<dbReference type="EnsemblFungi" id="EAL93513">
    <property type="protein sequence ID" value="EAL93513"/>
    <property type="gene ID" value="AFUA_2G12190"/>
</dbReference>
<dbReference type="GeneID" id="3513485"/>
<dbReference type="KEGG" id="afm:AFUA_2G12190"/>
<dbReference type="VEuPathDB" id="FungiDB:Afu2g12190"/>
<dbReference type="eggNOG" id="KOG1733">
    <property type="taxonomic scope" value="Eukaryota"/>
</dbReference>
<dbReference type="HOGENOM" id="CLU_141397_0_1_1"/>
<dbReference type="InParanoid" id="Q4X0V2"/>
<dbReference type="OMA" id="RCISQCM"/>
<dbReference type="OrthoDB" id="7813104at2759"/>
<dbReference type="Proteomes" id="UP000002530">
    <property type="component" value="Chromosome 2"/>
</dbReference>
<dbReference type="GO" id="GO:0005743">
    <property type="term" value="C:mitochondrial inner membrane"/>
    <property type="evidence" value="ECO:0007669"/>
    <property type="project" value="UniProtKB-SubCell"/>
</dbReference>
<dbReference type="GO" id="GO:0042719">
    <property type="term" value="C:mitochondrial intermembrane space protein transporter complex"/>
    <property type="evidence" value="ECO:0000318"/>
    <property type="project" value="GO_Central"/>
</dbReference>
<dbReference type="GO" id="GO:0046872">
    <property type="term" value="F:metal ion binding"/>
    <property type="evidence" value="ECO:0007669"/>
    <property type="project" value="UniProtKB-KW"/>
</dbReference>
<dbReference type="GO" id="GO:0140318">
    <property type="term" value="F:protein transporter activity"/>
    <property type="evidence" value="ECO:0007669"/>
    <property type="project" value="EnsemblFungi"/>
</dbReference>
<dbReference type="GO" id="GO:0045039">
    <property type="term" value="P:protein insertion into mitochondrial inner membrane"/>
    <property type="evidence" value="ECO:0000318"/>
    <property type="project" value="GO_Central"/>
</dbReference>
<dbReference type="FunFam" id="1.10.287.810:FF:000001">
    <property type="entry name" value="mitochondrial import inner membrane translocase subunit TIM13"/>
    <property type="match status" value="1"/>
</dbReference>
<dbReference type="Gene3D" id="1.10.287.810">
    <property type="entry name" value="Mitochondrial import inner membrane translocase subunit tim13 like domains"/>
    <property type="match status" value="1"/>
</dbReference>
<dbReference type="InterPro" id="IPR004217">
    <property type="entry name" value="Tim10-like"/>
</dbReference>
<dbReference type="InterPro" id="IPR035427">
    <property type="entry name" value="Tim10-like_dom_sf"/>
</dbReference>
<dbReference type="Pfam" id="PF02953">
    <property type="entry name" value="zf-Tim10_DDP"/>
    <property type="match status" value="1"/>
</dbReference>
<dbReference type="SUPFAM" id="SSF144122">
    <property type="entry name" value="Tim10-like"/>
    <property type="match status" value="1"/>
</dbReference>
<gene>
    <name type="primary">tim13</name>
    <name type="ORF">AFUA_2G12190</name>
</gene>
<evidence type="ECO:0000250" key="1"/>
<evidence type="ECO:0000305" key="2"/>
<organism>
    <name type="scientific">Aspergillus fumigatus (strain ATCC MYA-4609 / CBS 101355 / FGSC A1100 / Af293)</name>
    <name type="common">Neosartorya fumigata</name>
    <dbReference type="NCBI Taxonomy" id="330879"/>
    <lineage>
        <taxon>Eukaryota</taxon>
        <taxon>Fungi</taxon>
        <taxon>Dikarya</taxon>
        <taxon>Ascomycota</taxon>
        <taxon>Pezizomycotina</taxon>
        <taxon>Eurotiomycetes</taxon>
        <taxon>Eurotiomycetidae</taxon>
        <taxon>Eurotiales</taxon>
        <taxon>Aspergillaceae</taxon>
        <taxon>Aspergillus</taxon>
        <taxon>Aspergillus subgen. Fumigati</taxon>
    </lineage>
</organism>
<comment type="function">
    <text evidence="1">Mitochondrial intermembrane chaperone that participates in the import and insertion of some multi-pass transmembrane proteins into the mitochondrial inner membrane. Also required for the transfer of beta-barrel precursors from the TOM complex to the sorting and assembly machinery (SAM complex) of the outer membrane. Acts as a chaperone-like protein that protects the hydrophobic precursors from aggregation and guide them through the mitochondrial intermembrane space. The TIM8-TIM13 complex is non essential and only mediates the import of few proteins, while the predominant TIM9-TIM10 70 kDa complex is crucial and mediates the import of much more proteins (By similarity).</text>
</comment>
<comment type="subunit">
    <text evidence="1">Heterohexamer; composed of 3 copies of TIM8 and 3 copies of TIM13, named soluble 70 kDa complex. Associates with the TIM22 complex, whose core is composed of TIM22 and TIM54. Interacts with the transmembrane regions of multi-pass transmembrane proteins in transit (By similarity).</text>
</comment>
<comment type="subcellular location">
    <subcellularLocation>
        <location evidence="1">Mitochondrion inner membrane</location>
        <topology evidence="1">Peripheral membrane protein</topology>
        <orientation evidence="1">Intermembrane side</orientation>
    </subcellularLocation>
</comment>
<comment type="domain">
    <text evidence="1">The twin CX3C motif contains 4 conserved Cys residues that form 2 disulfide bonds in the mitochondrial intermembrane space. However, during the transit of TIM13 from cytoplasm into mitochondrion, the Cys residues probably coordinate zinc, thereby preventing folding and allowing its transfer across mitochondrial outer membrane (By similarity).</text>
</comment>
<comment type="similarity">
    <text evidence="2">Belongs to the small Tim family.</text>
</comment>
<accession>Q4X0V2</accession>
<reference key="1">
    <citation type="journal article" date="2005" name="Nature">
        <title>Genomic sequence of the pathogenic and allergenic filamentous fungus Aspergillus fumigatus.</title>
        <authorList>
            <person name="Nierman W.C."/>
            <person name="Pain A."/>
            <person name="Anderson M.J."/>
            <person name="Wortman J.R."/>
            <person name="Kim H.S."/>
            <person name="Arroyo J."/>
            <person name="Berriman M."/>
            <person name="Abe K."/>
            <person name="Archer D.B."/>
            <person name="Bermejo C."/>
            <person name="Bennett J.W."/>
            <person name="Bowyer P."/>
            <person name="Chen D."/>
            <person name="Collins M."/>
            <person name="Coulsen R."/>
            <person name="Davies R."/>
            <person name="Dyer P.S."/>
            <person name="Farman M.L."/>
            <person name="Fedorova N."/>
            <person name="Fedorova N.D."/>
            <person name="Feldblyum T.V."/>
            <person name="Fischer R."/>
            <person name="Fosker N."/>
            <person name="Fraser A."/>
            <person name="Garcia J.L."/>
            <person name="Garcia M.J."/>
            <person name="Goble A."/>
            <person name="Goldman G.H."/>
            <person name="Gomi K."/>
            <person name="Griffith-Jones S."/>
            <person name="Gwilliam R."/>
            <person name="Haas B.J."/>
            <person name="Haas H."/>
            <person name="Harris D.E."/>
            <person name="Horiuchi H."/>
            <person name="Huang J."/>
            <person name="Humphray S."/>
            <person name="Jimenez J."/>
            <person name="Keller N."/>
            <person name="Khouri H."/>
            <person name="Kitamoto K."/>
            <person name="Kobayashi T."/>
            <person name="Konzack S."/>
            <person name="Kulkarni R."/>
            <person name="Kumagai T."/>
            <person name="Lafton A."/>
            <person name="Latge J.-P."/>
            <person name="Li W."/>
            <person name="Lord A."/>
            <person name="Lu C."/>
            <person name="Majoros W.H."/>
            <person name="May G.S."/>
            <person name="Miller B.L."/>
            <person name="Mohamoud Y."/>
            <person name="Molina M."/>
            <person name="Monod M."/>
            <person name="Mouyna I."/>
            <person name="Mulligan S."/>
            <person name="Murphy L.D."/>
            <person name="O'Neil S."/>
            <person name="Paulsen I."/>
            <person name="Penalva M.A."/>
            <person name="Pertea M."/>
            <person name="Price C."/>
            <person name="Pritchard B.L."/>
            <person name="Quail M.A."/>
            <person name="Rabbinowitsch E."/>
            <person name="Rawlins N."/>
            <person name="Rajandream M.A."/>
            <person name="Reichard U."/>
            <person name="Renauld H."/>
            <person name="Robson G.D."/>
            <person name="Rodriguez de Cordoba S."/>
            <person name="Rodriguez-Pena J.M."/>
            <person name="Ronning C.M."/>
            <person name="Rutter S."/>
            <person name="Salzberg S.L."/>
            <person name="Sanchez M."/>
            <person name="Sanchez-Ferrero J.C."/>
            <person name="Saunders D."/>
            <person name="Seeger K."/>
            <person name="Squares R."/>
            <person name="Squares S."/>
            <person name="Takeuchi M."/>
            <person name="Tekaia F."/>
            <person name="Turner G."/>
            <person name="Vazquez de Aldana C.R."/>
            <person name="Weidman J."/>
            <person name="White O."/>
            <person name="Woodward J.R."/>
            <person name="Yu J.-H."/>
            <person name="Fraser C.M."/>
            <person name="Galagan J.E."/>
            <person name="Asai K."/>
            <person name="Machida M."/>
            <person name="Hall N."/>
            <person name="Barrell B.G."/>
            <person name="Denning D.W."/>
        </authorList>
    </citation>
    <scope>NUCLEOTIDE SEQUENCE [LARGE SCALE GENOMIC DNA]</scope>
    <source>
        <strain>ATCC MYA-4609 / CBS 101355 / FGSC A1100 / Af293</strain>
    </source>
</reference>
<feature type="chain" id="PRO_0000228070" description="Mitochondrial import inner membrane translocase subunit tim13">
    <location>
        <begin position="1"/>
        <end position="113"/>
    </location>
</feature>
<feature type="short sequence motif" description="Twin CX3C motif">
    <location>
        <begin position="47"/>
        <end position="70"/>
    </location>
</feature>
<feature type="disulfide bond" evidence="1">
    <location>
        <begin position="47"/>
        <end position="70"/>
    </location>
</feature>
<feature type="disulfide bond" evidence="1">
    <location>
        <begin position="51"/>
        <end position="66"/>
    </location>
</feature>
<protein>
    <recommendedName>
        <fullName>Mitochondrial import inner membrane translocase subunit tim13</fullName>
    </recommendedName>
</protein>
<name>TIM13_ASPFU</name>
<keyword id="KW-0143">Chaperone</keyword>
<keyword id="KW-1015">Disulfide bond</keyword>
<keyword id="KW-0472">Membrane</keyword>
<keyword id="KW-0479">Metal-binding</keyword>
<keyword id="KW-0496">Mitochondrion</keyword>
<keyword id="KW-0999">Mitochondrion inner membrane</keyword>
<keyword id="KW-0653">Protein transport</keyword>
<keyword id="KW-1185">Reference proteome</keyword>
<keyword id="KW-0811">Translocation</keyword>
<keyword id="KW-0813">Transport</keyword>
<keyword id="KW-0862">Zinc</keyword>
<sequence length="113" mass="12089">MAIWGSSSSNTASSGEADIKTHLMNQVRQEAAVTNARNLIGKVNEHCFEACIPNPGTSLSSAEHTCLSQCMEKYISFWNAVSRGYIARLANERKAYGGGALDASFVQSGESSL</sequence>
<proteinExistence type="inferred from homology"/>